<sequence length="45" mass="5362">MKRTFQPSNIKRVRNHGFRARMATKNGRLVLARRRAKGRKQLTRV</sequence>
<reference key="1">
    <citation type="journal article" date="2008" name="J. Bacteriol.">
        <title>Insights into plant cell wall degradation from the genome sequence of the soil bacterium Cellvibrio japonicus.</title>
        <authorList>
            <person name="DeBoy R.T."/>
            <person name="Mongodin E.F."/>
            <person name="Fouts D.E."/>
            <person name="Tailford L.E."/>
            <person name="Khouri H."/>
            <person name="Emerson J.B."/>
            <person name="Mohamoud Y."/>
            <person name="Watkins K."/>
            <person name="Henrissat B."/>
            <person name="Gilbert H.J."/>
            <person name="Nelson K.E."/>
        </authorList>
    </citation>
    <scope>NUCLEOTIDE SEQUENCE [LARGE SCALE GENOMIC DNA]</scope>
    <source>
        <strain>Ueda107</strain>
    </source>
</reference>
<organism>
    <name type="scientific">Cellvibrio japonicus (strain Ueda107)</name>
    <name type="common">Pseudomonas fluorescens subsp. cellulosa</name>
    <dbReference type="NCBI Taxonomy" id="498211"/>
    <lineage>
        <taxon>Bacteria</taxon>
        <taxon>Pseudomonadati</taxon>
        <taxon>Pseudomonadota</taxon>
        <taxon>Gammaproteobacteria</taxon>
        <taxon>Cellvibrionales</taxon>
        <taxon>Cellvibrionaceae</taxon>
        <taxon>Cellvibrio</taxon>
    </lineage>
</organism>
<protein>
    <recommendedName>
        <fullName evidence="1">Large ribosomal subunit protein bL34</fullName>
    </recommendedName>
    <alternativeName>
        <fullName evidence="2">50S ribosomal protein L34</fullName>
    </alternativeName>
</protein>
<proteinExistence type="inferred from homology"/>
<comment type="similarity">
    <text evidence="1">Belongs to the bacterial ribosomal protein bL34 family.</text>
</comment>
<evidence type="ECO:0000255" key="1">
    <source>
        <dbReference type="HAMAP-Rule" id="MF_00391"/>
    </source>
</evidence>
<evidence type="ECO:0000305" key="2"/>
<dbReference type="EMBL" id="CP000934">
    <property type="protein sequence ID" value="ACE83941.1"/>
    <property type="molecule type" value="Genomic_DNA"/>
</dbReference>
<dbReference type="RefSeq" id="WP_012489389.1">
    <property type="nucleotide sequence ID" value="NC_010995.1"/>
</dbReference>
<dbReference type="SMR" id="B3PIU4"/>
<dbReference type="STRING" id="498211.CJA_3826"/>
<dbReference type="KEGG" id="cja:CJA_3826"/>
<dbReference type="eggNOG" id="COG0230">
    <property type="taxonomic scope" value="Bacteria"/>
</dbReference>
<dbReference type="HOGENOM" id="CLU_129938_2_0_6"/>
<dbReference type="OrthoDB" id="9804164at2"/>
<dbReference type="Proteomes" id="UP000001036">
    <property type="component" value="Chromosome"/>
</dbReference>
<dbReference type="GO" id="GO:1990904">
    <property type="term" value="C:ribonucleoprotein complex"/>
    <property type="evidence" value="ECO:0007669"/>
    <property type="project" value="UniProtKB-KW"/>
</dbReference>
<dbReference type="GO" id="GO:0005840">
    <property type="term" value="C:ribosome"/>
    <property type="evidence" value="ECO:0007669"/>
    <property type="project" value="UniProtKB-KW"/>
</dbReference>
<dbReference type="GO" id="GO:0003735">
    <property type="term" value="F:structural constituent of ribosome"/>
    <property type="evidence" value="ECO:0007669"/>
    <property type="project" value="InterPro"/>
</dbReference>
<dbReference type="GO" id="GO:0006412">
    <property type="term" value="P:translation"/>
    <property type="evidence" value="ECO:0007669"/>
    <property type="project" value="UniProtKB-UniRule"/>
</dbReference>
<dbReference type="FunFam" id="1.10.287.3980:FF:000001">
    <property type="entry name" value="Mitochondrial ribosomal protein L34"/>
    <property type="match status" value="1"/>
</dbReference>
<dbReference type="Gene3D" id="1.10.287.3980">
    <property type="match status" value="1"/>
</dbReference>
<dbReference type="HAMAP" id="MF_00391">
    <property type="entry name" value="Ribosomal_bL34"/>
    <property type="match status" value="1"/>
</dbReference>
<dbReference type="InterPro" id="IPR000271">
    <property type="entry name" value="Ribosomal_bL34"/>
</dbReference>
<dbReference type="InterPro" id="IPR020939">
    <property type="entry name" value="Ribosomal_bL34_CS"/>
</dbReference>
<dbReference type="NCBIfam" id="TIGR01030">
    <property type="entry name" value="rpmH_bact"/>
    <property type="match status" value="1"/>
</dbReference>
<dbReference type="PANTHER" id="PTHR14503:SF4">
    <property type="entry name" value="LARGE RIBOSOMAL SUBUNIT PROTEIN BL34M"/>
    <property type="match status" value="1"/>
</dbReference>
<dbReference type="PANTHER" id="PTHR14503">
    <property type="entry name" value="MITOCHONDRIAL RIBOSOMAL PROTEIN 34 FAMILY MEMBER"/>
    <property type="match status" value="1"/>
</dbReference>
<dbReference type="Pfam" id="PF00468">
    <property type="entry name" value="Ribosomal_L34"/>
    <property type="match status" value="1"/>
</dbReference>
<dbReference type="PROSITE" id="PS00784">
    <property type="entry name" value="RIBOSOMAL_L34"/>
    <property type="match status" value="1"/>
</dbReference>
<gene>
    <name evidence="1" type="primary">rpmH</name>
    <name type="ordered locus">CJA_3826</name>
</gene>
<feature type="chain" id="PRO_1000196018" description="Large ribosomal subunit protein bL34">
    <location>
        <begin position="1"/>
        <end position="45"/>
    </location>
</feature>
<keyword id="KW-1185">Reference proteome</keyword>
<keyword id="KW-0687">Ribonucleoprotein</keyword>
<keyword id="KW-0689">Ribosomal protein</keyword>
<accession>B3PIU4</accession>
<name>RL34_CELJU</name>